<organism>
    <name type="scientific">Daucus carota</name>
    <name type="common">Wild carrot</name>
    <dbReference type="NCBI Taxonomy" id="4039"/>
    <lineage>
        <taxon>Eukaryota</taxon>
        <taxon>Viridiplantae</taxon>
        <taxon>Streptophyta</taxon>
        <taxon>Embryophyta</taxon>
        <taxon>Tracheophyta</taxon>
        <taxon>Spermatophyta</taxon>
        <taxon>Magnoliopsida</taxon>
        <taxon>eudicotyledons</taxon>
        <taxon>Gunneridae</taxon>
        <taxon>Pentapetalae</taxon>
        <taxon>asterids</taxon>
        <taxon>campanulids</taxon>
        <taxon>Apiales</taxon>
        <taxon>Apiaceae</taxon>
        <taxon>Apioideae</taxon>
        <taxon>Scandiceae</taxon>
        <taxon>Daucinae</taxon>
        <taxon>Daucus</taxon>
        <taxon>Daucus sect. Daucus</taxon>
    </lineage>
</organism>
<gene>
    <name evidence="1" type="primary">psbC</name>
</gene>
<name>PSBC_DAUCA</name>
<comment type="function">
    <text evidence="1">One of the components of the core complex of photosystem II (PSII). It binds chlorophyll and helps catalyze the primary light-induced photochemical processes of PSII. PSII is a light-driven water:plastoquinone oxidoreductase, using light energy to abstract electrons from H(2)O, generating O(2) and a proton gradient subsequently used for ATP formation.</text>
</comment>
<comment type="cofactor">
    <text evidence="1">Binds multiple chlorophylls and provides some of the ligands for the Ca-4Mn-5O cluster of the oxygen-evolving complex. It may also provide a ligand for a Cl- that is required for oxygen evolution. PSII binds additional chlorophylls, carotenoids and specific lipids.</text>
</comment>
<comment type="subunit">
    <text evidence="1">PSII is composed of 1 copy each of membrane proteins PsbA, PsbB, PsbC, PsbD, PsbE, PsbF, PsbH, PsbI, PsbJ, PsbK, PsbL, PsbM, PsbT, PsbX, PsbY, PsbZ, Psb30/Ycf12, at least 3 peripheral proteins of the oxygen-evolving complex and a large number of cofactors. It forms dimeric complexes.</text>
</comment>
<comment type="subcellular location">
    <subcellularLocation>
        <location evidence="1">Plastid</location>
        <location evidence="1">Chloroplast thylakoid membrane</location>
        <topology evidence="1">Multi-pass membrane protein</topology>
    </subcellularLocation>
</comment>
<comment type="similarity">
    <text evidence="1">Belongs to the PsbB/PsbC family. PsbC subfamily.</text>
</comment>
<proteinExistence type="inferred from homology"/>
<protein>
    <recommendedName>
        <fullName evidence="1">Photosystem II CP43 reaction center protein</fullName>
    </recommendedName>
    <alternativeName>
        <fullName evidence="1">PSII 43 kDa protein</fullName>
    </alternativeName>
    <alternativeName>
        <fullName evidence="1">Protein CP-43</fullName>
    </alternativeName>
</protein>
<feature type="propeptide" id="PRO_0000431139" evidence="1">
    <location>
        <begin position="1"/>
        <end position="14"/>
    </location>
</feature>
<feature type="chain" id="PRO_0000361372" description="Photosystem II CP43 reaction center protein" evidence="1">
    <location>
        <begin position="15"/>
        <end position="473"/>
    </location>
</feature>
<feature type="transmembrane region" description="Helical" evidence="1">
    <location>
        <begin position="69"/>
        <end position="93"/>
    </location>
</feature>
<feature type="transmembrane region" description="Helical" evidence="1">
    <location>
        <begin position="134"/>
        <end position="155"/>
    </location>
</feature>
<feature type="transmembrane region" description="Helical" evidence="1">
    <location>
        <begin position="178"/>
        <end position="200"/>
    </location>
</feature>
<feature type="transmembrane region" description="Helical" evidence="1">
    <location>
        <begin position="255"/>
        <end position="275"/>
    </location>
</feature>
<feature type="transmembrane region" description="Helical" evidence="1">
    <location>
        <begin position="291"/>
        <end position="312"/>
    </location>
</feature>
<feature type="transmembrane region" description="Helical" evidence="1">
    <location>
        <begin position="447"/>
        <end position="471"/>
    </location>
</feature>
<feature type="binding site" evidence="1">
    <location>
        <position position="367"/>
    </location>
    <ligand>
        <name>[CaMn4O5] cluster</name>
        <dbReference type="ChEBI" id="CHEBI:189552"/>
    </ligand>
</feature>
<feature type="modified residue" description="N-acetylthreonine" evidence="1">
    <location>
        <position position="15"/>
    </location>
</feature>
<feature type="modified residue" description="Phosphothreonine" evidence="1">
    <location>
        <position position="15"/>
    </location>
</feature>
<accession>Q0G9W6</accession>
<geneLocation type="chloroplast"/>
<sequence>MKTLYSLRRFYPVETLFNGTLALAGRDQETTGFAWWAGNARLINLSGKLLGAHVAHAGLIVFWAGGMNLFEVAHFVPEKPMYEQGLILLPHLATLGWGVGPGGEVIDTFPYFVSGVLHLISSAVLGFGGIYHALLGPETLEESFPFFGYVWKDRNKMTTILGIHLILLGIGAFLLVFKALYFGGVYDTWAPGGGDVRKITNLTLNPSIIFGYLLKSPFGGEGWIVSVDDLEDIIGGHVWLGSICIFGGIWHILTKPFAWARRALVWSGEAYLSYSLAALSVFGFIACCFVWFNNTAYPSEFYGPTGPEASQAQAFTFLVRDQRLGANVGSAQGPTGLGKYLMRSPTGEVIFGGETMRFWDLRAPWLEPLRGPNGLDLSRLKKDIQPWQERRSAEYMTHAPLGSLNSVGGVATEINAVNYVSPRSWLATSHFVLGFFLFVGHLWHAGRARAAAAGFEKGIDRDFEPVLSMTPLN</sequence>
<evidence type="ECO:0000255" key="1">
    <source>
        <dbReference type="HAMAP-Rule" id="MF_01496"/>
    </source>
</evidence>
<dbReference type="EMBL" id="DQ898156">
    <property type="protein sequence ID" value="ABI32420.1"/>
    <property type="molecule type" value="Genomic_DNA"/>
</dbReference>
<dbReference type="RefSeq" id="YP_740113.1">
    <property type="nucleotide sequence ID" value="NC_008325.1"/>
</dbReference>
<dbReference type="SMR" id="Q0G9W6"/>
<dbReference type="GeneID" id="4266728"/>
<dbReference type="OMA" id="FIWNGEA"/>
<dbReference type="GO" id="GO:0009535">
    <property type="term" value="C:chloroplast thylakoid membrane"/>
    <property type="evidence" value="ECO:0007669"/>
    <property type="project" value="UniProtKB-SubCell"/>
</dbReference>
<dbReference type="GO" id="GO:0009523">
    <property type="term" value="C:photosystem II"/>
    <property type="evidence" value="ECO:0007669"/>
    <property type="project" value="UniProtKB-KW"/>
</dbReference>
<dbReference type="GO" id="GO:0016168">
    <property type="term" value="F:chlorophyll binding"/>
    <property type="evidence" value="ECO:0007669"/>
    <property type="project" value="UniProtKB-UniRule"/>
</dbReference>
<dbReference type="GO" id="GO:0045156">
    <property type="term" value="F:electron transporter, transferring electrons within the cyclic electron transport pathway of photosynthesis activity"/>
    <property type="evidence" value="ECO:0007669"/>
    <property type="project" value="InterPro"/>
</dbReference>
<dbReference type="GO" id="GO:0046872">
    <property type="term" value="F:metal ion binding"/>
    <property type="evidence" value="ECO:0007669"/>
    <property type="project" value="UniProtKB-KW"/>
</dbReference>
<dbReference type="GO" id="GO:0009772">
    <property type="term" value="P:photosynthetic electron transport in photosystem II"/>
    <property type="evidence" value="ECO:0007669"/>
    <property type="project" value="InterPro"/>
</dbReference>
<dbReference type="FunFam" id="1.10.10.670:FF:000001">
    <property type="entry name" value="Photosystem II CP43 reaction center protein"/>
    <property type="match status" value="1"/>
</dbReference>
<dbReference type="Gene3D" id="1.10.10.670">
    <property type="entry name" value="photosystem ii from thermosynechococcus elongatus"/>
    <property type="match status" value="1"/>
</dbReference>
<dbReference type="HAMAP" id="MF_01496">
    <property type="entry name" value="PSII_PsbC_CP43"/>
    <property type="match status" value="1"/>
</dbReference>
<dbReference type="InterPro" id="IPR000932">
    <property type="entry name" value="PS_antenna-like"/>
</dbReference>
<dbReference type="InterPro" id="IPR036001">
    <property type="entry name" value="PS_II_antenna-like_sf"/>
</dbReference>
<dbReference type="InterPro" id="IPR005869">
    <property type="entry name" value="PSII_PsbC"/>
</dbReference>
<dbReference type="InterPro" id="IPR044900">
    <property type="entry name" value="PSII_PsbC_sf"/>
</dbReference>
<dbReference type="NCBIfam" id="TIGR01153">
    <property type="entry name" value="psbC"/>
    <property type="match status" value="1"/>
</dbReference>
<dbReference type="Pfam" id="PF00421">
    <property type="entry name" value="PSII"/>
    <property type="match status" value="1"/>
</dbReference>
<dbReference type="SUPFAM" id="SSF161077">
    <property type="entry name" value="Photosystem II antenna protein-like"/>
    <property type="match status" value="1"/>
</dbReference>
<reference key="1">
    <citation type="journal article" date="2006" name="BMC Genomics">
        <title>Complete plastid genome sequence of Daucus carota: implications for biotechnology and phylogeny of angiosperms.</title>
        <authorList>
            <person name="Ruhlman T."/>
            <person name="Lee S.-B."/>
            <person name="Jansen R.K."/>
            <person name="Hostetler J.B."/>
            <person name="Tallon L.J."/>
            <person name="Town C.D."/>
            <person name="Daniell H."/>
        </authorList>
    </citation>
    <scope>NUCLEOTIDE SEQUENCE [LARGE SCALE GENOMIC DNA]</scope>
    <source>
        <strain>cv. Danvers Half-long</strain>
    </source>
</reference>
<keyword id="KW-0007">Acetylation</keyword>
<keyword id="KW-0148">Chlorophyll</keyword>
<keyword id="KW-0150">Chloroplast</keyword>
<keyword id="KW-0157">Chromophore</keyword>
<keyword id="KW-0464">Manganese</keyword>
<keyword id="KW-0472">Membrane</keyword>
<keyword id="KW-0479">Metal-binding</keyword>
<keyword id="KW-0597">Phosphoprotein</keyword>
<keyword id="KW-0602">Photosynthesis</keyword>
<keyword id="KW-0604">Photosystem II</keyword>
<keyword id="KW-0934">Plastid</keyword>
<keyword id="KW-0793">Thylakoid</keyword>
<keyword id="KW-0812">Transmembrane</keyword>
<keyword id="KW-1133">Transmembrane helix</keyword>